<protein>
    <recommendedName>
        <fullName>TelA-like protein SAS1347</fullName>
    </recommendedName>
</protein>
<reference key="1">
    <citation type="journal article" date="2004" name="Proc. Natl. Acad. Sci. U.S.A.">
        <title>Complete genomes of two clinical Staphylococcus aureus strains: evidence for the rapid evolution of virulence and drug resistance.</title>
        <authorList>
            <person name="Holden M.T.G."/>
            <person name="Feil E.J."/>
            <person name="Lindsay J.A."/>
            <person name="Peacock S.J."/>
            <person name="Day N.P.J."/>
            <person name="Enright M.C."/>
            <person name="Foster T.J."/>
            <person name="Moore C.E."/>
            <person name="Hurst L."/>
            <person name="Atkin R."/>
            <person name="Barron A."/>
            <person name="Bason N."/>
            <person name="Bentley S.D."/>
            <person name="Chillingworth C."/>
            <person name="Chillingworth T."/>
            <person name="Churcher C."/>
            <person name="Clark L."/>
            <person name="Corton C."/>
            <person name="Cronin A."/>
            <person name="Doggett J."/>
            <person name="Dowd L."/>
            <person name="Feltwell T."/>
            <person name="Hance Z."/>
            <person name="Harris B."/>
            <person name="Hauser H."/>
            <person name="Holroyd S."/>
            <person name="Jagels K."/>
            <person name="James K.D."/>
            <person name="Lennard N."/>
            <person name="Line A."/>
            <person name="Mayes R."/>
            <person name="Moule S."/>
            <person name="Mungall K."/>
            <person name="Ormond D."/>
            <person name="Quail M.A."/>
            <person name="Rabbinowitsch E."/>
            <person name="Rutherford K.M."/>
            <person name="Sanders M."/>
            <person name="Sharp S."/>
            <person name="Simmonds M."/>
            <person name="Stevens K."/>
            <person name="Whitehead S."/>
            <person name="Barrell B.G."/>
            <person name="Spratt B.G."/>
            <person name="Parkhill J."/>
        </authorList>
    </citation>
    <scope>NUCLEOTIDE SEQUENCE [LARGE SCALE GENOMIC DNA]</scope>
    <source>
        <strain>MSSA476</strain>
    </source>
</reference>
<organism>
    <name type="scientific">Staphylococcus aureus (strain MSSA476)</name>
    <dbReference type="NCBI Taxonomy" id="282459"/>
    <lineage>
        <taxon>Bacteria</taxon>
        <taxon>Bacillati</taxon>
        <taxon>Bacillota</taxon>
        <taxon>Bacilli</taxon>
        <taxon>Bacillales</taxon>
        <taxon>Staphylococcaceae</taxon>
        <taxon>Staphylococcus</taxon>
    </lineage>
</organism>
<gene>
    <name type="ordered locus">SAS1347</name>
</gene>
<evidence type="ECO:0000305" key="1"/>
<sequence>MTENKSFKESHPLDDFISDKELSNTTIQKEKLTIEQQKQVDTISKQINPLDNEGLLAFGSDLQKQMSQFSHQMLDEVQSKDVGPIGDTLSDLISKLKSVNPNELNTDKPSMLKRIFSRAKSSINEIFSRMQSVSAQVDRITIQLQKHQTHLTRDIELLDTLYDKNKQYFDDLSLHIIAAQQKKLQLENEKLPQLQQQAQQSTNQMDIQHVADMQQFIDRLDKRIYDLQLSRQIALQTAPQIRMIQNVNQALAEKIQSSILTSIPLWKNQMAIALTLMRQRNAVAAQRAVTDTTNDLLTANAEMLKQNAIETATENERGIVDLDTLKRTQRNIIETIEETLIIQQHGREERQLAEKELQQLEQDLKSHLVNIKGTNKQS</sequence>
<accession>Q6G9F5</accession>
<proteinExistence type="inferred from homology"/>
<name>TELL_STAAS</name>
<feature type="chain" id="PRO_0000172806" description="TelA-like protein SAS1347">
    <location>
        <begin position="1"/>
        <end position="378"/>
    </location>
</feature>
<dbReference type="EMBL" id="BX571857">
    <property type="protein sequence ID" value="CAG43123.1"/>
    <property type="molecule type" value="Genomic_DNA"/>
</dbReference>
<dbReference type="RefSeq" id="WP_000138403.1">
    <property type="nucleotide sequence ID" value="NC_002953.3"/>
</dbReference>
<dbReference type="SMR" id="Q6G9F5"/>
<dbReference type="KEGG" id="sas:SAS1347"/>
<dbReference type="HOGENOM" id="CLU_032111_0_0_9"/>
<dbReference type="InterPro" id="IPR008863">
    <property type="entry name" value="Toxic_anion-R_TelA"/>
</dbReference>
<dbReference type="PANTHER" id="PTHR38432">
    <property type="entry name" value="TELA-LIKE PROTEIN SAOUHSC_01408"/>
    <property type="match status" value="1"/>
</dbReference>
<dbReference type="PANTHER" id="PTHR38432:SF1">
    <property type="entry name" value="TELA-LIKE PROTEIN SAOUHSC_01408"/>
    <property type="match status" value="1"/>
</dbReference>
<dbReference type="Pfam" id="PF05816">
    <property type="entry name" value="TelA"/>
    <property type="match status" value="1"/>
</dbReference>
<dbReference type="PIRSF" id="PIRSF026508">
    <property type="entry name" value="TelA"/>
    <property type="match status" value="1"/>
</dbReference>
<comment type="similarity">
    <text evidence="1">Belongs to the TelA family.</text>
</comment>